<keyword id="KW-0694">RNA-binding</keyword>
<keyword id="KW-0346">Stress response</keyword>
<comment type="function">
    <text evidence="1">RNA chaperone that binds small regulatory RNA (sRNAs) and mRNAs to facilitate mRNA translational regulation in response to envelope stress, environmental stress and changes in metabolite concentrations. Also binds with high specificity to tRNAs.</text>
</comment>
<comment type="subunit">
    <text evidence="1">Homohexamer.</text>
</comment>
<comment type="similarity">
    <text evidence="1">Belongs to the Hfq family.</text>
</comment>
<dbReference type="EMBL" id="CP001615">
    <property type="protein sequence ID" value="ACQ69066.1"/>
    <property type="molecule type" value="Genomic_DNA"/>
</dbReference>
<dbReference type="RefSeq" id="WP_012726185.1">
    <property type="nucleotide sequence ID" value="NZ_MOEL01000013.1"/>
</dbReference>
<dbReference type="SMR" id="C4L1C0"/>
<dbReference type="STRING" id="360911.EAT1b_0132"/>
<dbReference type="GeneID" id="94372237"/>
<dbReference type="KEGG" id="eat:EAT1b_0132"/>
<dbReference type="eggNOG" id="COG1923">
    <property type="taxonomic scope" value="Bacteria"/>
</dbReference>
<dbReference type="HOGENOM" id="CLU_113688_0_2_9"/>
<dbReference type="OrthoDB" id="9799751at2"/>
<dbReference type="Proteomes" id="UP000000716">
    <property type="component" value="Chromosome"/>
</dbReference>
<dbReference type="GO" id="GO:0005829">
    <property type="term" value="C:cytosol"/>
    <property type="evidence" value="ECO:0007669"/>
    <property type="project" value="TreeGrafter"/>
</dbReference>
<dbReference type="GO" id="GO:0003723">
    <property type="term" value="F:RNA binding"/>
    <property type="evidence" value="ECO:0007669"/>
    <property type="project" value="UniProtKB-UniRule"/>
</dbReference>
<dbReference type="GO" id="GO:0006355">
    <property type="term" value="P:regulation of DNA-templated transcription"/>
    <property type="evidence" value="ECO:0007669"/>
    <property type="project" value="InterPro"/>
</dbReference>
<dbReference type="GO" id="GO:0043487">
    <property type="term" value="P:regulation of RNA stability"/>
    <property type="evidence" value="ECO:0007669"/>
    <property type="project" value="TreeGrafter"/>
</dbReference>
<dbReference type="GO" id="GO:0045974">
    <property type="term" value="P:regulation of translation, ncRNA-mediated"/>
    <property type="evidence" value="ECO:0007669"/>
    <property type="project" value="TreeGrafter"/>
</dbReference>
<dbReference type="CDD" id="cd01716">
    <property type="entry name" value="Hfq"/>
    <property type="match status" value="1"/>
</dbReference>
<dbReference type="FunFam" id="2.30.30.100:FF:000012">
    <property type="entry name" value="RNA-binding protein Hfq"/>
    <property type="match status" value="1"/>
</dbReference>
<dbReference type="Gene3D" id="2.30.30.100">
    <property type="match status" value="1"/>
</dbReference>
<dbReference type="HAMAP" id="MF_00436">
    <property type="entry name" value="Hfq"/>
    <property type="match status" value="1"/>
</dbReference>
<dbReference type="InterPro" id="IPR005001">
    <property type="entry name" value="Hfq"/>
</dbReference>
<dbReference type="InterPro" id="IPR010920">
    <property type="entry name" value="LSM_dom_sf"/>
</dbReference>
<dbReference type="InterPro" id="IPR047575">
    <property type="entry name" value="Sm"/>
</dbReference>
<dbReference type="NCBIfam" id="TIGR02383">
    <property type="entry name" value="Hfq"/>
    <property type="match status" value="1"/>
</dbReference>
<dbReference type="NCBIfam" id="NF001602">
    <property type="entry name" value="PRK00395.1"/>
    <property type="match status" value="1"/>
</dbReference>
<dbReference type="PANTHER" id="PTHR34772">
    <property type="entry name" value="RNA-BINDING PROTEIN HFQ"/>
    <property type="match status" value="1"/>
</dbReference>
<dbReference type="PANTHER" id="PTHR34772:SF1">
    <property type="entry name" value="RNA-BINDING PROTEIN HFQ"/>
    <property type="match status" value="1"/>
</dbReference>
<dbReference type="Pfam" id="PF17209">
    <property type="entry name" value="Hfq"/>
    <property type="match status" value="1"/>
</dbReference>
<dbReference type="SUPFAM" id="SSF50182">
    <property type="entry name" value="Sm-like ribonucleoproteins"/>
    <property type="match status" value="1"/>
</dbReference>
<dbReference type="PROSITE" id="PS52002">
    <property type="entry name" value="SM"/>
    <property type="match status" value="1"/>
</dbReference>
<sequence>MKASYNIQDHFLNQLRKEMVPTTVFLVSGFQIRGVIKSFDNFTVIVESEGRQQLIYKHAISTFSPARNVTLYEPDAVEVTEG</sequence>
<name>HFQ_EXISA</name>
<protein>
    <recommendedName>
        <fullName evidence="1">RNA-binding protein Hfq</fullName>
    </recommendedName>
</protein>
<evidence type="ECO:0000255" key="1">
    <source>
        <dbReference type="HAMAP-Rule" id="MF_00436"/>
    </source>
</evidence>
<evidence type="ECO:0000255" key="2">
    <source>
        <dbReference type="PROSITE-ProRule" id="PRU01346"/>
    </source>
</evidence>
<feature type="chain" id="PRO_1000206100" description="RNA-binding protein Hfq">
    <location>
        <begin position="1"/>
        <end position="82"/>
    </location>
</feature>
<feature type="domain" description="Sm" evidence="2">
    <location>
        <begin position="9"/>
        <end position="69"/>
    </location>
</feature>
<gene>
    <name evidence="1" type="primary">hfq</name>
    <name type="ordered locus">EAT1b_0132</name>
</gene>
<accession>C4L1C0</accession>
<proteinExistence type="inferred from homology"/>
<organism>
    <name type="scientific">Exiguobacterium sp. (strain ATCC BAA-1283 / AT1b)</name>
    <dbReference type="NCBI Taxonomy" id="360911"/>
    <lineage>
        <taxon>Bacteria</taxon>
        <taxon>Bacillati</taxon>
        <taxon>Bacillota</taxon>
        <taxon>Bacilli</taxon>
        <taxon>Bacillales</taxon>
        <taxon>Bacillales Family XII. Incertae Sedis</taxon>
        <taxon>Exiguobacterium</taxon>
    </lineage>
</organism>
<reference key="1">
    <citation type="journal article" date="2011" name="J. Bacteriol.">
        <title>Complete genome sequence of the Thermophilic Bacterium Exiguobacterium sp. AT1b.</title>
        <authorList>
            <person name="Vishnivetskaya T.A."/>
            <person name="Lucas S."/>
            <person name="Copeland A."/>
            <person name="Lapidus A."/>
            <person name="Glavina del Rio T."/>
            <person name="Dalin E."/>
            <person name="Tice H."/>
            <person name="Bruce D.C."/>
            <person name="Goodwin L.A."/>
            <person name="Pitluck S."/>
            <person name="Saunders E."/>
            <person name="Brettin T."/>
            <person name="Detter C."/>
            <person name="Han C."/>
            <person name="Larimer F."/>
            <person name="Land M.L."/>
            <person name="Hauser L.J."/>
            <person name="Kyrpides N.C."/>
            <person name="Ovchinnikova G."/>
            <person name="Kathariou S."/>
            <person name="Ramaley R.F."/>
            <person name="Rodrigues D.F."/>
            <person name="Hendrix C."/>
            <person name="Richardson P."/>
            <person name="Tiedje J.M."/>
        </authorList>
    </citation>
    <scope>NUCLEOTIDE SEQUENCE [LARGE SCALE GENOMIC DNA]</scope>
    <source>
        <strain>ATCC BAA-1283 / AT1b</strain>
    </source>
</reference>